<accession>A4SFP1</accession>
<dbReference type="EC" id="2.1.2.9" evidence="1"/>
<dbReference type="EMBL" id="CP000607">
    <property type="protein sequence ID" value="ABP37300.1"/>
    <property type="molecule type" value="Genomic_DNA"/>
</dbReference>
<dbReference type="SMR" id="A4SFP1"/>
<dbReference type="STRING" id="290318.Cvib_1288"/>
<dbReference type="KEGG" id="pvi:Cvib_1288"/>
<dbReference type="eggNOG" id="COG0223">
    <property type="taxonomic scope" value="Bacteria"/>
</dbReference>
<dbReference type="HOGENOM" id="CLU_033347_1_1_10"/>
<dbReference type="OrthoDB" id="9802815at2"/>
<dbReference type="GO" id="GO:0005829">
    <property type="term" value="C:cytosol"/>
    <property type="evidence" value="ECO:0007669"/>
    <property type="project" value="TreeGrafter"/>
</dbReference>
<dbReference type="GO" id="GO:0004479">
    <property type="term" value="F:methionyl-tRNA formyltransferase activity"/>
    <property type="evidence" value="ECO:0007669"/>
    <property type="project" value="UniProtKB-UniRule"/>
</dbReference>
<dbReference type="CDD" id="cd08646">
    <property type="entry name" value="FMT_core_Met-tRNA-FMT_N"/>
    <property type="match status" value="1"/>
</dbReference>
<dbReference type="CDD" id="cd08704">
    <property type="entry name" value="Met_tRNA_FMT_C"/>
    <property type="match status" value="1"/>
</dbReference>
<dbReference type="Gene3D" id="3.40.50.12230">
    <property type="match status" value="1"/>
</dbReference>
<dbReference type="HAMAP" id="MF_00182">
    <property type="entry name" value="Formyl_trans"/>
    <property type="match status" value="1"/>
</dbReference>
<dbReference type="InterPro" id="IPR005794">
    <property type="entry name" value="Fmt"/>
</dbReference>
<dbReference type="InterPro" id="IPR005793">
    <property type="entry name" value="Formyl_trans_C"/>
</dbReference>
<dbReference type="InterPro" id="IPR002376">
    <property type="entry name" value="Formyl_transf_N"/>
</dbReference>
<dbReference type="InterPro" id="IPR036477">
    <property type="entry name" value="Formyl_transf_N_sf"/>
</dbReference>
<dbReference type="InterPro" id="IPR011034">
    <property type="entry name" value="Formyl_transferase-like_C_sf"/>
</dbReference>
<dbReference type="InterPro" id="IPR044135">
    <property type="entry name" value="Met-tRNA-FMT_C"/>
</dbReference>
<dbReference type="InterPro" id="IPR041711">
    <property type="entry name" value="Met-tRNA-FMT_N"/>
</dbReference>
<dbReference type="NCBIfam" id="TIGR00460">
    <property type="entry name" value="fmt"/>
    <property type="match status" value="1"/>
</dbReference>
<dbReference type="PANTHER" id="PTHR11138">
    <property type="entry name" value="METHIONYL-TRNA FORMYLTRANSFERASE"/>
    <property type="match status" value="1"/>
</dbReference>
<dbReference type="PANTHER" id="PTHR11138:SF5">
    <property type="entry name" value="METHIONYL-TRNA FORMYLTRANSFERASE, MITOCHONDRIAL"/>
    <property type="match status" value="1"/>
</dbReference>
<dbReference type="Pfam" id="PF02911">
    <property type="entry name" value="Formyl_trans_C"/>
    <property type="match status" value="1"/>
</dbReference>
<dbReference type="Pfam" id="PF00551">
    <property type="entry name" value="Formyl_trans_N"/>
    <property type="match status" value="1"/>
</dbReference>
<dbReference type="SUPFAM" id="SSF50486">
    <property type="entry name" value="FMT C-terminal domain-like"/>
    <property type="match status" value="1"/>
</dbReference>
<dbReference type="SUPFAM" id="SSF53328">
    <property type="entry name" value="Formyltransferase"/>
    <property type="match status" value="1"/>
</dbReference>
<feature type="chain" id="PRO_1000077311" description="Methionyl-tRNA formyltransferase">
    <location>
        <begin position="1"/>
        <end position="319"/>
    </location>
</feature>
<feature type="binding site" evidence="1">
    <location>
        <begin position="116"/>
        <end position="119"/>
    </location>
    <ligand>
        <name>(6S)-5,6,7,8-tetrahydrofolate</name>
        <dbReference type="ChEBI" id="CHEBI:57453"/>
    </ligand>
</feature>
<sequence length="319" mass="34340">MHVTPLRLIFMGTPDFAVPSLQAIVDASLPVEVVQVVTAPDRPRRKKNAEAEPTPVKSLALQLGLPVLEVEDVKDPGFAEAVRRLQPDVIVVAAFRILPPAVYGAARLGAFNLHASLLPAYRGAAPINHALIEGERESGVTTFFLQRQVDTGNIILKKSTPINSMENATQLAERLSQIGAEAVVETLRLIAEGTVEVSAQDESLVSKAPKLTRENTRIDWNQSAEDLHNFIRGLAMRPTAWTTLGGKNFKIFQSAPAPAVPATSCGKPGTMLIEGGCLYASGTDGWIEILSLQLEGKRPMDAGEFLRGFRAESGVLFGS</sequence>
<reference key="1">
    <citation type="submission" date="2007-03" db="EMBL/GenBank/DDBJ databases">
        <title>Complete sequence of Prosthecochloris vibrioformis DSM 265.</title>
        <authorList>
            <consortium name="US DOE Joint Genome Institute"/>
            <person name="Copeland A."/>
            <person name="Lucas S."/>
            <person name="Lapidus A."/>
            <person name="Barry K."/>
            <person name="Detter J.C."/>
            <person name="Glavina del Rio T."/>
            <person name="Hammon N."/>
            <person name="Israni S."/>
            <person name="Pitluck S."/>
            <person name="Schmutz J."/>
            <person name="Larimer F."/>
            <person name="Land M."/>
            <person name="Hauser L."/>
            <person name="Mikhailova N."/>
            <person name="Li T."/>
            <person name="Overmann J."/>
            <person name="Schuster S.C."/>
            <person name="Bryant D.A."/>
            <person name="Richardson P."/>
        </authorList>
    </citation>
    <scope>NUCLEOTIDE SEQUENCE [LARGE SCALE GENOMIC DNA]</scope>
    <source>
        <strain>DSM 265 / 1930</strain>
    </source>
</reference>
<name>FMT_CHLPM</name>
<proteinExistence type="inferred from homology"/>
<organism>
    <name type="scientific">Chlorobium phaeovibrioides (strain DSM 265 / 1930)</name>
    <name type="common">Prosthecochloris vibrioformis (strain DSM 265)</name>
    <dbReference type="NCBI Taxonomy" id="290318"/>
    <lineage>
        <taxon>Bacteria</taxon>
        <taxon>Pseudomonadati</taxon>
        <taxon>Chlorobiota</taxon>
        <taxon>Chlorobiia</taxon>
        <taxon>Chlorobiales</taxon>
        <taxon>Chlorobiaceae</taxon>
        <taxon>Chlorobium/Pelodictyon group</taxon>
        <taxon>Chlorobium</taxon>
    </lineage>
</organism>
<evidence type="ECO:0000255" key="1">
    <source>
        <dbReference type="HAMAP-Rule" id="MF_00182"/>
    </source>
</evidence>
<comment type="function">
    <text evidence="1">Attaches a formyl group to the free amino group of methionyl-tRNA(fMet). The formyl group appears to play a dual role in the initiator identity of N-formylmethionyl-tRNA by promoting its recognition by IF2 and preventing the misappropriation of this tRNA by the elongation apparatus.</text>
</comment>
<comment type="catalytic activity">
    <reaction evidence="1">
        <text>L-methionyl-tRNA(fMet) + (6R)-10-formyltetrahydrofolate = N-formyl-L-methionyl-tRNA(fMet) + (6S)-5,6,7,8-tetrahydrofolate + H(+)</text>
        <dbReference type="Rhea" id="RHEA:24380"/>
        <dbReference type="Rhea" id="RHEA-COMP:9952"/>
        <dbReference type="Rhea" id="RHEA-COMP:9953"/>
        <dbReference type="ChEBI" id="CHEBI:15378"/>
        <dbReference type="ChEBI" id="CHEBI:57453"/>
        <dbReference type="ChEBI" id="CHEBI:78530"/>
        <dbReference type="ChEBI" id="CHEBI:78844"/>
        <dbReference type="ChEBI" id="CHEBI:195366"/>
        <dbReference type="EC" id="2.1.2.9"/>
    </reaction>
</comment>
<comment type="similarity">
    <text evidence="1">Belongs to the Fmt family.</text>
</comment>
<gene>
    <name evidence="1" type="primary">fmt</name>
    <name type="ordered locus">Cvib_1288</name>
</gene>
<keyword id="KW-0648">Protein biosynthesis</keyword>
<keyword id="KW-0808">Transferase</keyword>
<protein>
    <recommendedName>
        <fullName evidence="1">Methionyl-tRNA formyltransferase</fullName>
        <ecNumber evidence="1">2.1.2.9</ecNumber>
    </recommendedName>
</protein>